<protein>
    <recommendedName>
        <fullName evidence="1">Cytoplasmic envelopment protein 1</fullName>
    </recommendedName>
</protein>
<reference key="1">
    <citation type="journal article" date="1997" name="J. Virol.">
        <title>Primary structure of the alcelaphine herpesvirus 1 genome.</title>
        <authorList>
            <person name="Ensser A."/>
            <person name="Pflanz R."/>
            <person name="Fleckenstein B."/>
        </authorList>
    </citation>
    <scope>NUCLEOTIDE SEQUENCE [LARGE SCALE GENOMIC DNA]</scope>
</reference>
<keyword id="KW-1035">Host cytoplasm</keyword>
<keyword id="KW-1040">Host Golgi apparatus</keyword>
<keyword id="KW-1185">Reference proteome</keyword>
<keyword id="KW-0946">Virion</keyword>
<keyword id="KW-0920">Virion tegument</keyword>
<gene>
    <name type="primary">42</name>
</gene>
<sequence length="257" mass="29196">MDLRAKPASTCSNYTLLLPRLVLEVSKNDKICVACNSPDFVNSNGNLNVKDLEAHAKARLHSSHFAGFVLCPIVASEDKVSTFDMYYHVIQERTVLYRPQNTVLTEMCCIISALENCVVPSASLLIQYLDRANQLFNRHPSRDSLFLLGGVKTLISTLMHWHGFQHPDVSQLPRGLQSYELYKDLESFDAECKDLMLSMFCKSFKLGDWNEENEQLEAFTFNLFYSPTILTKHFKSKIIISSIKEACLLKDCVLSLI</sequence>
<dbReference type="EMBL" id="AF005370">
    <property type="protein sequence ID" value="AAC58088.1"/>
    <property type="molecule type" value="Genomic_DNA"/>
</dbReference>
<dbReference type="PIR" id="T03136">
    <property type="entry name" value="T03136"/>
</dbReference>
<dbReference type="RefSeq" id="NP_065540.1">
    <property type="nucleotide sequence ID" value="NC_002531.1"/>
</dbReference>
<dbReference type="SMR" id="O36391"/>
<dbReference type="KEGG" id="vg:911761"/>
<dbReference type="Proteomes" id="UP000000941">
    <property type="component" value="Segment"/>
</dbReference>
<dbReference type="GO" id="GO:0044177">
    <property type="term" value="C:host cell Golgi apparatus"/>
    <property type="evidence" value="ECO:0007669"/>
    <property type="project" value="UniProtKB-SubCell"/>
</dbReference>
<dbReference type="GO" id="GO:0019033">
    <property type="term" value="C:viral tegument"/>
    <property type="evidence" value="ECO:0007669"/>
    <property type="project" value="UniProtKB-SubCell"/>
</dbReference>
<dbReference type="HAMAP" id="MF_04038">
    <property type="entry name" value="HSV_CEP1"/>
    <property type="match status" value="1"/>
</dbReference>
<dbReference type="InterPro" id="IPR002600">
    <property type="entry name" value="Herpes_UL7"/>
</dbReference>
<dbReference type="Pfam" id="PF01677">
    <property type="entry name" value="Herpes_UL7"/>
    <property type="match status" value="1"/>
</dbReference>
<name>CEP1_ALHV1</name>
<organismHost>
    <name type="scientific">Connochaetes taurinus</name>
    <name type="common">Blue wildebeest</name>
    <dbReference type="NCBI Taxonomy" id="9927"/>
</organismHost>
<evidence type="ECO:0000255" key="1">
    <source>
        <dbReference type="HAMAP-Rule" id="MF_04038"/>
    </source>
</evidence>
<comment type="function">
    <text evidence="1">Plays a critical role in cytoplasmic virus egress. Participates in the final step of tegumentation and envelope acquisition within the host cytoplasm.</text>
</comment>
<comment type="subcellular location">
    <subcellularLocation>
        <location evidence="1">Virion</location>
    </subcellularLocation>
    <subcellularLocation>
        <location evidence="1">Virion tegument</location>
    </subcellularLocation>
    <subcellularLocation>
        <location evidence="1">Host cytoplasm</location>
    </subcellularLocation>
    <subcellularLocation>
        <location evidence="1">Host Golgi apparatus</location>
    </subcellularLocation>
</comment>
<comment type="similarity">
    <text evidence="1">Belongs to the herpesviridae cytoplasmic envelopment protein 1 family.</text>
</comment>
<feature type="chain" id="PRO_0000405761" description="Cytoplasmic envelopment protein 1">
    <location>
        <begin position="1"/>
        <end position="257"/>
    </location>
</feature>
<organism>
    <name type="scientific">Alcelaphine herpesvirus 1 (strain C500)</name>
    <name type="common">AlHV-1</name>
    <name type="synonym">Malignant catarrhal fever virus</name>
    <dbReference type="NCBI Taxonomy" id="654901"/>
    <lineage>
        <taxon>Viruses</taxon>
        <taxon>Duplodnaviria</taxon>
        <taxon>Heunggongvirae</taxon>
        <taxon>Peploviricota</taxon>
        <taxon>Herviviricetes</taxon>
        <taxon>Herpesvirales</taxon>
        <taxon>Orthoherpesviridae</taxon>
        <taxon>Gammaherpesvirinae</taxon>
        <taxon>Macavirus</taxon>
        <taxon>Macavirus alcelaphinegamma1</taxon>
    </lineage>
</organism>
<accession>O36391</accession>
<proteinExistence type="inferred from homology"/>